<proteinExistence type="inferred from homology"/>
<protein>
    <recommendedName>
        <fullName evidence="1">DnaA initiator-associating protein DiaA</fullName>
    </recommendedName>
</protein>
<comment type="function">
    <text evidence="1">Required for the timely initiation of chromosomal replication via direct interactions with the DnaA initiator protein.</text>
</comment>
<comment type="subunit">
    <text evidence="1">Homotetramer; dimer of dimers.</text>
</comment>
<comment type="similarity">
    <text evidence="1">Belongs to the SIS family. DiaA subfamily.</text>
</comment>
<gene>
    <name evidence="1" type="primary">diaA</name>
    <name type="ordered locus">Ecok1_31500</name>
    <name type="ORF">APECO1_3281</name>
</gene>
<reference key="1">
    <citation type="journal article" date="2007" name="J. Bacteriol.">
        <title>The genome sequence of avian pathogenic Escherichia coli strain O1:K1:H7 shares strong similarities with human extraintestinal pathogenic E. coli genomes.</title>
        <authorList>
            <person name="Johnson T.J."/>
            <person name="Kariyawasam S."/>
            <person name="Wannemuehler Y."/>
            <person name="Mangiamele P."/>
            <person name="Johnson S.J."/>
            <person name="Doetkott C."/>
            <person name="Skyberg J.A."/>
            <person name="Lynne A.M."/>
            <person name="Johnson J.R."/>
            <person name="Nolan L.K."/>
        </authorList>
    </citation>
    <scope>NUCLEOTIDE SEQUENCE [LARGE SCALE GENOMIC DNA]</scope>
</reference>
<keyword id="KW-0235">DNA replication</keyword>
<keyword id="KW-1185">Reference proteome</keyword>
<dbReference type="EMBL" id="CP000468">
    <property type="protein sequence ID" value="ABJ02644.1"/>
    <property type="molecule type" value="Genomic_DNA"/>
</dbReference>
<dbReference type="RefSeq" id="WP_001158035.1">
    <property type="nucleotide sequence ID" value="NZ_CADILS010000003.1"/>
</dbReference>
<dbReference type="SMR" id="A1AG54"/>
<dbReference type="GeneID" id="75206004"/>
<dbReference type="KEGG" id="ecv:APECO1_3281"/>
<dbReference type="HOGENOM" id="CLU_080999_3_1_6"/>
<dbReference type="Proteomes" id="UP000008216">
    <property type="component" value="Chromosome"/>
</dbReference>
<dbReference type="GO" id="GO:0097367">
    <property type="term" value="F:carbohydrate derivative binding"/>
    <property type="evidence" value="ECO:0007669"/>
    <property type="project" value="InterPro"/>
</dbReference>
<dbReference type="GO" id="GO:1901135">
    <property type="term" value="P:carbohydrate derivative metabolic process"/>
    <property type="evidence" value="ECO:0007669"/>
    <property type="project" value="InterPro"/>
</dbReference>
<dbReference type="GO" id="GO:0006260">
    <property type="term" value="P:DNA replication"/>
    <property type="evidence" value="ECO:0007669"/>
    <property type="project" value="UniProtKB-UniRule"/>
</dbReference>
<dbReference type="CDD" id="cd05006">
    <property type="entry name" value="SIS_GmhA"/>
    <property type="match status" value="1"/>
</dbReference>
<dbReference type="FunFam" id="3.40.50.10490:FF:000006">
    <property type="entry name" value="DnaA initiator-associating protein DiaA"/>
    <property type="match status" value="1"/>
</dbReference>
<dbReference type="Gene3D" id="3.40.50.10490">
    <property type="entry name" value="Glucose-6-phosphate isomerase like protein, domain 1"/>
    <property type="match status" value="1"/>
</dbReference>
<dbReference type="HAMAP" id="MF_01157">
    <property type="entry name" value="SIS_DiaA"/>
    <property type="match status" value="1"/>
</dbReference>
<dbReference type="InterPro" id="IPR023070">
    <property type="entry name" value="DiaA"/>
</dbReference>
<dbReference type="InterPro" id="IPR035461">
    <property type="entry name" value="GmhA/DiaA"/>
</dbReference>
<dbReference type="InterPro" id="IPR001347">
    <property type="entry name" value="SIS_dom"/>
</dbReference>
<dbReference type="InterPro" id="IPR046348">
    <property type="entry name" value="SIS_dom_sf"/>
</dbReference>
<dbReference type="InterPro" id="IPR050099">
    <property type="entry name" value="SIS_GmhA/DiaA_subfam"/>
</dbReference>
<dbReference type="NCBIfam" id="NF008138">
    <property type="entry name" value="PRK10886.1"/>
    <property type="match status" value="1"/>
</dbReference>
<dbReference type="NCBIfam" id="NF010546">
    <property type="entry name" value="PRK13936.1"/>
    <property type="match status" value="1"/>
</dbReference>
<dbReference type="PANTHER" id="PTHR30390:SF6">
    <property type="entry name" value="DNAA INITIATOR-ASSOCIATING PROTEIN DIAA"/>
    <property type="match status" value="1"/>
</dbReference>
<dbReference type="PANTHER" id="PTHR30390">
    <property type="entry name" value="SEDOHEPTULOSE 7-PHOSPHATE ISOMERASE / DNAA INITIATOR-ASSOCIATING FACTOR FOR REPLICATION INITIATION"/>
    <property type="match status" value="1"/>
</dbReference>
<dbReference type="Pfam" id="PF13580">
    <property type="entry name" value="SIS_2"/>
    <property type="match status" value="1"/>
</dbReference>
<dbReference type="SUPFAM" id="SSF53697">
    <property type="entry name" value="SIS domain"/>
    <property type="match status" value="1"/>
</dbReference>
<dbReference type="PROSITE" id="PS51464">
    <property type="entry name" value="SIS"/>
    <property type="match status" value="1"/>
</dbReference>
<sequence length="196" mass="21090">MQERIKACFTESIQTQIAAAEALPDAISRAAMTLVQSLLNGNKILCCGNGTSAANAQHFAASMINRFETERPSLPAIALNTDNVVLTAIANDRLHDEVYAKQVRALGHAGDVLLAISTRGNSRDIVKAVEAAVTRDMTIVALTGYDGGELAGLLGPQDVEIRIPSHRSARIQEMHMLTVNCLCDLIDNTLFPHQDV</sequence>
<name>DIAA_ECOK1</name>
<evidence type="ECO:0000255" key="1">
    <source>
        <dbReference type="HAMAP-Rule" id="MF_01157"/>
    </source>
</evidence>
<accession>A1AG54</accession>
<feature type="chain" id="PRO_1000065540" description="DnaA initiator-associating protein DiaA">
    <location>
        <begin position="1"/>
        <end position="196"/>
    </location>
</feature>
<feature type="domain" description="SIS" evidence="1">
    <location>
        <begin position="34"/>
        <end position="196"/>
    </location>
</feature>
<organism>
    <name type="scientific">Escherichia coli O1:K1 / APEC</name>
    <dbReference type="NCBI Taxonomy" id="405955"/>
    <lineage>
        <taxon>Bacteria</taxon>
        <taxon>Pseudomonadati</taxon>
        <taxon>Pseudomonadota</taxon>
        <taxon>Gammaproteobacteria</taxon>
        <taxon>Enterobacterales</taxon>
        <taxon>Enterobacteriaceae</taxon>
        <taxon>Escherichia</taxon>
    </lineage>
</organism>